<reference key="1">
    <citation type="journal article" date="1996" name="Neuron">
        <title>Genetic analysis of netrin genes in Drosophila: netrins guide CNS commissural axons and peripheral motor axons.</title>
        <authorList>
            <person name="Mitchell K.J."/>
            <person name="Doyle J.L."/>
            <person name="Serafini T."/>
            <person name="Kennedy T."/>
            <person name="Tessier-Lavigne M."/>
            <person name="Goodman C.S."/>
            <person name="Dickson B.J."/>
        </authorList>
    </citation>
    <scope>NUCLEOTIDE SEQUENCE [MRNA]</scope>
    <scope>FUNCTION</scope>
    <scope>TISSUE SPECIFICITY</scope>
    <source>
        <tissue>Embryo</tissue>
    </source>
</reference>
<reference key="2">
    <citation type="journal article" date="1996" name="Neuron">
        <title>Guidance cues at the Drosophila CNS midline: identification and characterization of two Drosophila Netrin/UNC-6 homologs.</title>
        <authorList>
            <person name="Harris R."/>
            <person name="Moore-Sabatelli L."/>
            <person name="Seeger M."/>
        </authorList>
    </citation>
    <scope>NUCLEOTIDE SEQUENCE [MRNA]</scope>
    <scope>FUNCTION</scope>
    <scope>TISSUE SPECIFICITY</scope>
    <source>
        <tissue>Embryo</tissue>
    </source>
</reference>
<reference key="3">
    <citation type="journal article" date="2000" name="Science">
        <title>The genome sequence of Drosophila melanogaster.</title>
        <authorList>
            <person name="Adams M.D."/>
            <person name="Celniker S.E."/>
            <person name="Holt R.A."/>
            <person name="Evans C.A."/>
            <person name="Gocayne J.D."/>
            <person name="Amanatides P.G."/>
            <person name="Scherer S.E."/>
            <person name="Li P.W."/>
            <person name="Hoskins R.A."/>
            <person name="Galle R.F."/>
            <person name="George R.A."/>
            <person name="Lewis S.E."/>
            <person name="Richards S."/>
            <person name="Ashburner M."/>
            <person name="Henderson S.N."/>
            <person name="Sutton G.G."/>
            <person name="Wortman J.R."/>
            <person name="Yandell M.D."/>
            <person name="Zhang Q."/>
            <person name="Chen L.X."/>
            <person name="Brandon R.C."/>
            <person name="Rogers Y.-H.C."/>
            <person name="Blazej R.G."/>
            <person name="Champe M."/>
            <person name="Pfeiffer B.D."/>
            <person name="Wan K.H."/>
            <person name="Doyle C."/>
            <person name="Baxter E.G."/>
            <person name="Helt G."/>
            <person name="Nelson C.R."/>
            <person name="Miklos G.L.G."/>
            <person name="Abril J.F."/>
            <person name="Agbayani A."/>
            <person name="An H.-J."/>
            <person name="Andrews-Pfannkoch C."/>
            <person name="Baldwin D."/>
            <person name="Ballew R.M."/>
            <person name="Basu A."/>
            <person name="Baxendale J."/>
            <person name="Bayraktaroglu L."/>
            <person name="Beasley E.M."/>
            <person name="Beeson K.Y."/>
            <person name="Benos P.V."/>
            <person name="Berman B.P."/>
            <person name="Bhandari D."/>
            <person name="Bolshakov S."/>
            <person name="Borkova D."/>
            <person name="Botchan M.R."/>
            <person name="Bouck J."/>
            <person name="Brokstein P."/>
            <person name="Brottier P."/>
            <person name="Burtis K.C."/>
            <person name="Busam D.A."/>
            <person name="Butler H."/>
            <person name="Cadieu E."/>
            <person name="Center A."/>
            <person name="Chandra I."/>
            <person name="Cherry J.M."/>
            <person name="Cawley S."/>
            <person name="Dahlke C."/>
            <person name="Davenport L.B."/>
            <person name="Davies P."/>
            <person name="de Pablos B."/>
            <person name="Delcher A."/>
            <person name="Deng Z."/>
            <person name="Mays A.D."/>
            <person name="Dew I."/>
            <person name="Dietz S.M."/>
            <person name="Dodson K."/>
            <person name="Doup L.E."/>
            <person name="Downes M."/>
            <person name="Dugan-Rocha S."/>
            <person name="Dunkov B.C."/>
            <person name="Dunn P."/>
            <person name="Durbin K.J."/>
            <person name="Evangelista C.C."/>
            <person name="Ferraz C."/>
            <person name="Ferriera S."/>
            <person name="Fleischmann W."/>
            <person name="Fosler C."/>
            <person name="Gabrielian A.E."/>
            <person name="Garg N.S."/>
            <person name="Gelbart W.M."/>
            <person name="Glasser K."/>
            <person name="Glodek A."/>
            <person name="Gong F."/>
            <person name="Gorrell J.H."/>
            <person name="Gu Z."/>
            <person name="Guan P."/>
            <person name="Harris M."/>
            <person name="Harris N.L."/>
            <person name="Harvey D.A."/>
            <person name="Heiman T.J."/>
            <person name="Hernandez J.R."/>
            <person name="Houck J."/>
            <person name="Hostin D."/>
            <person name="Houston K.A."/>
            <person name="Howland T.J."/>
            <person name="Wei M.-H."/>
            <person name="Ibegwam C."/>
            <person name="Jalali M."/>
            <person name="Kalush F."/>
            <person name="Karpen G.H."/>
            <person name="Ke Z."/>
            <person name="Kennison J.A."/>
            <person name="Ketchum K.A."/>
            <person name="Kimmel B.E."/>
            <person name="Kodira C.D."/>
            <person name="Kraft C.L."/>
            <person name="Kravitz S."/>
            <person name="Kulp D."/>
            <person name="Lai Z."/>
            <person name="Lasko P."/>
            <person name="Lei Y."/>
            <person name="Levitsky A.A."/>
            <person name="Li J.H."/>
            <person name="Li Z."/>
            <person name="Liang Y."/>
            <person name="Lin X."/>
            <person name="Liu X."/>
            <person name="Mattei B."/>
            <person name="McIntosh T.C."/>
            <person name="McLeod M.P."/>
            <person name="McPherson D."/>
            <person name="Merkulov G."/>
            <person name="Milshina N.V."/>
            <person name="Mobarry C."/>
            <person name="Morris J."/>
            <person name="Moshrefi A."/>
            <person name="Mount S.M."/>
            <person name="Moy M."/>
            <person name="Murphy B."/>
            <person name="Murphy L."/>
            <person name="Muzny D.M."/>
            <person name="Nelson D.L."/>
            <person name="Nelson D.R."/>
            <person name="Nelson K.A."/>
            <person name="Nixon K."/>
            <person name="Nusskern D.R."/>
            <person name="Pacleb J.M."/>
            <person name="Palazzolo M."/>
            <person name="Pittman G.S."/>
            <person name="Pan S."/>
            <person name="Pollard J."/>
            <person name="Puri V."/>
            <person name="Reese M.G."/>
            <person name="Reinert K."/>
            <person name="Remington K."/>
            <person name="Saunders R.D.C."/>
            <person name="Scheeler F."/>
            <person name="Shen H."/>
            <person name="Shue B.C."/>
            <person name="Siden-Kiamos I."/>
            <person name="Simpson M."/>
            <person name="Skupski M.P."/>
            <person name="Smith T.J."/>
            <person name="Spier E."/>
            <person name="Spradling A.C."/>
            <person name="Stapleton M."/>
            <person name="Strong R."/>
            <person name="Sun E."/>
            <person name="Svirskas R."/>
            <person name="Tector C."/>
            <person name="Turner R."/>
            <person name="Venter E."/>
            <person name="Wang A.H."/>
            <person name="Wang X."/>
            <person name="Wang Z.-Y."/>
            <person name="Wassarman D.A."/>
            <person name="Weinstock G.M."/>
            <person name="Weissenbach J."/>
            <person name="Williams S.M."/>
            <person name="Woodage T."/>
            <person name="Worley K.C."/>
            <person name="Wu D."/>
            <person name="Yang S."/>
            <person name="Yao Q.A."/>
            <person name="Ye J."/>
            <person name="Yeh R.-F."/>
            <person name="Zaveri J.S."/>
            <person name="Zhan M."/>
            <person name="Zhang G."/>
            <person name="Zhao Q."/>
            <person name="Zheng L."/>
            <person name="Zheng X.H."/>
            <person name="Zhong F.N."/>
            <person name="Zhong W."/>
            <person name="Zhou X."/>
            <person name="Zhu S.C."/>
            <person name="Zhu X."/>
            <person name="Smith H.O."/>
            <person name="Gibbs R.A."/>
            <person name="Myers E.W."/>
            <person name="Rubin G.M."/>
            <person name="Venter J.C."/>
        </authorList>
    </citation>
    <scope>NUCLEOTIDE SEQUENCE [LARGE SCALE GENOMIC DNA]</scope>
    <source>
        <strain>Berkeley</strain>
    </source>
</reference>
<reference key="4">
    <citation type="journal article" date="2002" name="Genome Biol.">
        <title>Annotation of the Drosophila melanogaster euchromatic genome: a systematic review.</title>
        <authorList>
            <person name="Misra S."/>
            <person name="Crosby M.A."/>
            <person name="Mungall C.J."/>
            <person name="Matthews B.B."/>
            <person name="Campbell K.S."/>
            <person name="Hradecky P."/>
            <person name="Huang Y."/>
            <person name="Kaminker J.S."/>
            <person name="Millburn G.H."/>
            <person name="Prochnik S.E."/>
            <person name="Smith C.D."/>
            <person name="Tupy J.L."/>
            <person name="Whitfield E.J."/>
            <person name="Bayraktaroglu L."/>
            <person name="Berman B.P."/>
            <person name="Bettencourt B.R."/>
            <person name="Celniker S.E."/>
            <person name="de Grey A.D.N.J."/>
            <person name="Drysdale R.A."/>
            <person name="Harris N.L."/>
            <person name="Richter J."/>
            <person name="Russo S."/>
            <person name="Schroeder A.J."/>
            <person name="Shu S.Q."/>
            <person name="Stapleton M."/>
            <person name="Yamada C."/>
            <person name="Ashburner M."/>
            <person name="Gelbart W.M."/>
            <person name="Rubin G.M."/>
            <person name="Lewis S.E."/>
        </authorList>
    </citation>
    <scope>GENOME REANNOTATION</scope>
    <source>
        <strain>Berkeley</strain>
    </source>
</reference>
<reference key="5">
    <citation type="journal article" date="2002" name="Genome Biol.">
        <title>A Drosophila full-length cDNA resource.</title>
        <authorList>
            <person name="Stapleton M."/>
            <person name="Carlson J.W."/>
            <person name="Brokstein P."/>
            <person name="Yu C."/>
            <person name="Champe M."/>
            <person name="George R.A."/>
            <person name="Guarin H."/>
            <person name="Kronmiller B."/>
            <person name="Pacleb J.M."/>
            <person name="Park S."/>
            <person name="Wan K.H."/>
            <person name="Rubin G.M."/>
            <person name="Celniker S.E."/>
        </authorList>
    </citation>
    <scope>NUCLEOTIDE SEQUENCE [LARGE SCALE MRNA]</scope>
    <source>
        <strain>Berkeley</strain>
        <tissue>Embryo</tissue>
    </source>
</reference>
<organism>
    <name type="scientific">Drosophila melanogaster</name>
    <name type="common">Fruit fly</name>
    <dbReference type="NCBI Taxonomy" id="7227"/>
    <lineage>
        <taxon>Eukaryota</taxon>
        <taxon>Metazoa</taxon>
        <taxon>Ecdysozoa</taxon>
        <taxon>Arthropoda</taxon>
        <taxon>Hexapoda</taxon>
        <taxon>Insecta</taxon>
        <taxon>Pterygota</taxon>
        <taxon>Neoptera</taxon>
        <taxon>Endopterygota</taxon>
        <taxon>Diptera</taxon>
        <taxon>Brachycera</taxon>
        <taxon>Muscomorpha</taxon>
        <taxon>Ephydroidea</taxon>
        <taxon>Drosophilidae</taxon>
        <taxon>Drosophila</taxon>
        <taxon>Sophophora</taxon>
    </lineage>
</organism>
<keyword id="KW-0217">Developmental protein</keyword>
<keyword id="KW-0221">Differentiation</keyword>
<keyword id="KW-1015">Disulfide bond</keyword>
<keyword id="KW-0272">Extracellular matrix</keyword>
<keyword id="KW-0325">Glycoprotein</keyword>
<keyword id="KW-0424">Laminin EGF-like domain</keyword>
<keyword id="KW-0524">Neurogenesis</keyword>
<keyword id="KW-1185">Reference proteome</keyword>
<keyword id="KW-0677">Repeat</keyword>
<keyword id="KW-0964">Secreted</keyword>
<keyword id="KW-0732">Signal</keyword>
<proteinExistence type="evidence at transcript level"/>
<sequence length="726" mass="80366">MIRGILLLLLGTTRFSPIQCISNDVYFKMFSQQAPPEDPCYNKAHEPRACIPDFVNAAYDAPVVASSTCGSSGAQRYCEYQDHERSCHTCDMTDPLRSFPARSLTDLNNSNNVTCWRSEPVTGSGDNVTLTLSLGKKFELTYVILQLCPHAPRPDSMVIYKSTDHGLSWQPFQFFSSQCRRLFGRPARQSTGRHNEHEARCSDVTRPLVSRIAFSTLEGRPSSRDLDSSPVLQDWVTATDIRVVFHRLQRPDPQALLSLEAGGATDLASGKYSVPLANGPAGNNIEANLGGDVATSGSGLHYAISDFSVGGRCKCNGHASKCSTDASGQLNCECSHNTAGRDCERCKPFHFDRPWARATAKEANECKECNCNKHARQCRFNMEIFRLSQGVSGGVCQNCRHSTTGRNCHQCKEGFYRDATKPLTHRKVCKACDCHPIGSSGKICNSTSGQCPCKDGVTGLTCNRCARGYQQSRSHIAPCIKQPPRMINMLDTQNTAPEPDEPESSPGSGGDRNGAAGMAAQSQYYRTEGGRECGKCRVSTKRLNLNKFCKRDYAIMAKVIGRDTSSEAVSREVQRRAMDPDVADYEMDQVQPGSARSPITGVYEFQAADYPNPNPNPRGSEMERFDLQIQAVFKRSRPGESSGAGNVYGMPNTTLKRGPMTWIIPTKDLECRCPRIRVNRSYLILGRDSEAPPGYLGIGPHSIVIEWKEDWYRRMKRFQRRARTCA</sequence>
<comment type="function">
    <text evidence="7 8">Netrins control guidance of CNS commissural axons at the midline and peripheral motor axons to their target muscles.</text>
</comment>
<comment type="subcellular location">
    <subcellularLocation>
        <location>Secreted</location>
        <location>Extracellular space</location>
        <location>Extracellular matrix</location>
    </subcellularLocation>
</comment>
<comment type="tissue specificity">
    <text evidence="7 8">At the midline of developing CNS at the time of commissure formation and in different subsets of neurons, muscles, and epidermal patches.</text>
</comment>
<comment type="sequence caution" evidence="9">
    <conflict type="frameshift">
        <sequence resource="EMBL-CDS" id="AAL90318"/>
    </conflict>
</comment>
<name>NETA_DROME</name>
<feature type="signal peptide" evidence="2">
    <location>
        <begin position="1"/>
        <end position="29"/>
    </location>
</feature>
<feature type="chain" id="PRO_0000017088" description="Netrin-A">
    <location>
        <begin position="30"/>
        <end position="726"/>
    </location>
</feature>
<feature type="domain" description="Laminin N-terminal" evidence="5">
    <location>
        <begin position="46"/>
        <end position="312"/>
    </location>
</feature>
<feature type="domain" description="Laminin EGF-like 1" evidence="4">
    <location>
        <begin position="313"/>
        <end position="368"/>
    </location>
</feature>
<feature type="domain" description="Laminin EGF-like 2" evidence="4">
    <location>
        <begin position="369"/>
        <end position="431"/>
    </location>
</feature>
<feature type="domain" description="Laminin EGF-like 3" evidence="4">
    <location>
        <begin position="432"/>
        <end position="481"/>
    </location>
</feature>
<feature type="domain" description="NTR" evidence="3">
    <location>
        <begin position="533"/>
        <end position="725"/>
    </location>
</feature>
<feature type="region of interest" description="Disordered" evidence="6">
    <location>
        <begin position="490"/>
        <end position="516"/>
    </location>
</feature>
<feature type="glycosylation site" description="N-linked (GlcNAc...) asparagine" evidence="2">
    <location>
        <position position="108"/>
    </location>
</feature>
<feature type="glycosylation site" description="N-linked (GlcNAc...) asparagine" evidence="2">
    <location>
        <position position="112"/>
    </location>
</feature>
<feature type="glycosylation site" description="N-linked (GlcNAc...) asparagine" evidence="2">
    <location>
        <position position="127"/>
    </location>
</feature>
<feature type="glycosylation site" description="N-linked (GlcNAc...) asparagine" evidence="2">
    <location>
        <position position="445"/>
    </location>
</feature>
<feature type="glycosylation site" description="N-linked (GlcNAc...) asparagine" evidence="2">
    <location>
        <position position="652"/>
    </location>
</feature>
<feature type="glycosylation site" description="N-linked (GlcNAc...) asparagine" evidence="2">
    <location>
        <position position="679"/>
    </location>
</feature>
<feature type="disulfide bond" evidence="1">
    <location>
        <begin position="313"/>
        <end position="322"/>
    </location>
</feature>
<feature type="disulfide bond" evidence="1">
    <location>
        <begin position="315"/>
        <end position="332"/>
    </location>
</feature>
<feature type="disulfide bond" evidence="1">
    <location>
        <begin position="334"/>
        <end position="343"/>
    </location>
</feature>
<feature type="disulfide bond" evidence="1">
    <location>
        <begin position="346"/>
        <end position="366"/>
    </location>
</feature>
<feature type="disulfide bond" evidence="1">
    <location>
        <begin position="369"/>
        <end position="378"/>
    </location>
</feature>
<feature type="disulfide bond" evidence="1">
    <location>
        <begin position="371"/>
        <end position="396"/>
    </location>
</feature>
<feature type="disulfide bond" evidence="1">
    <location>
        <begin position="399"/>
        <end position="408"/>
    </location>
</feature>
<feature type="disulfide bond" evidence="1">
    <location>
        <begin position="411"/>
        <end position="429"/>
    </location>
</feature>
<feature type="disulfide bond" evidence="1">
    <location>
        <begin position="432"/>
        <end position="444"/>
    </location>
</feature>
<feature type="disulfide bond" evidence="1">
    <location>
        <begin position="434"/>
        <end position="451"/>
    </location>
</feature>
<feature type="disulfide bond" evidence="1">
    <location>
        <begin position="453"/>
        <end position="462"/>
    </location>
</feature>
<feature type="disulfide bond" evidence="1">
    <location>
        <begin position="465"/>
        <end position="479"/>
    </location>
</feature>
<feature type="disulfide bond" evidence="1">
    <location>
        <begin position="533"/>
        <end position="671"/>
    </location>
</feature>
<feature type="disulfide bond" evidence="1">
    <location>
        <begin position="549"/>
        <end position="725"/>
    </location>
</feature>
<feature type="sequence conflict" description="In Ref. 1 and 2." evidence="9" ref="1 2">
    <original>S</original>
    <variation>F</variation>
    <location>
        <position position="22"/>
    </location>
</feature>
<feature type="sequence conflict" description="In Ref. 1 and 2." evidence="9" ref="1 2">
    <original>E</original>
    <variation>A</variation>
    <location>
        <position position="501"/>
    </location>
</feature>
<feature type="sequence conflict" description="In Ref. 2." evidence="9" ref="2">
    <original>GAA</original>
    <variation>APP</variation>
    <location>
        <begin position="514"/>
        <end position="516"/>
    </location>
</feature>
<feature type="sequence conflict" description="In Ref. 1 and 2." evidence="9" ref="1 2">
    <original>GMAAQSQYYRTEGGRE</original>
    <variation>EWPPSLSTIAPRAAGVK</variation>
    <location>
        <begin position="517"/>
        <end position="532"/>
    </location>
</feature>
<feature type="sequence conflict" description="In Ref. 1; AAB17533." evidence="9" ref="1">
    <original>S</original>
    <variation>T</variation>
    <location>
        <position position="636"/>
    </location>
</feature>
<accession>Q24567</accession>
<accession>Q7JXY0</accession>
<accession>Q94528</accession>
<accession>Q9VY25</accession>
<protein>
    <recommendedName>
        <fullName>Netrin-A</fullName>
    </recommendedName>
</protein>
<dbReference type="EMBL" id="U60316">
    <property type="protein sequence ID" value="AAB17533.1"/>
    <property type="molecule type" value="mRNA"/>
</dbReference>
<dbReference type="EMBL" id="U63736">
    <property type="protein sequence ID" value="AAB17547.1"/>
    <property type="molecule type" value="mRNA"/>
</dbReference>
<dbReference type="EMBL" id="AE014298">
    <property type="protein sequence ID" value="AAF48380.3"/>
    <property type="molecule type" value="Genomic_DNA"/>
</dbReference>
<dbReference type="EMBL" id="AY089580">
    <property type="protein sequence ID" value="AAL90318.1"/>
    <property type="status" value="ALT_FRAME"/>
    <property type="molecule type" value="mRNA"/>
</dbReference>
<dbReference type="RefSeq" id="NP_001245667.1">
    <property type="nucleotide sequence ID" value="NM_001258738.2"/>
</dbReference>
<dbReference type="RefSeq" id="NP_001285243.1">
    <property type="nucleotide sequence ID" value="NM_001298314.1"/>
</dbReference>
<dbReference type="RefSeq" id="NP_511154.3">
    <property type="nucleotide sequence ID" value="NM_078599.5"/>
</dbReference>
<dbReference type="SMR" id="Q24567"/>
<dbReference type="BioGRID" id="58759">
    <property type="interactions" value="8"/>
</dbReference>
<dbReference type="FunCoup" id="Q24567">
    <property type="interactions" value="89"/>
</dbReference>
<dbReference type="IntAct" id="Q24567">
    <property type="interactions" value="42"/>
</dbReference>
<dbReference type="STRING" id="7227.FBpp0311922"/>
<dbReference type="GlyCosmos" id="Q24567">
    <property type="glycosylation" value="6 sites, No reported glycans"/>
</dbReference>
<dbReference type="GlyGen" id="Q24567">
    <property type="glycosylation" value="6 sites"/>
</dbReference>
<dbReference type="PaxDb" id="7227-FBpp0073759"/>
<dbReference type="DNASU" id="32398"/>
<dbReference type="EnsemblMetazoa" id="FBtr0073942">
    <property type="protein sequence ID" value="FBpp0073759"/>
    <property type="gene ID" value="FBgn0015773"/>
</dbReference>
<dbReference type="EnsemblMetazoa" id="FBtr0346088">
    <property type="protein sequence ID" value="FBpp0311922"/>
    <property type="gene ID" value="FBgn0015773"/>
</dbReference>
<dbReference type="GeneID" id="32398"/>
<dbReference type="KEGG" id="dme:Dmel_CG18657"/>
<dbReference type="AGR" id="FB:FBgn0015773"/>
<dbReference type="CTD" id="32398"/>
<dbReference type="FlyBase" id="FBgn0015773">
    <property type="gene designation" value="NetA"/>
</dbReference>
<dbReference type="VEuPathDB" id="VectorBase:FBgn0015773"/>
<dbReference type="eggNOG" id="KOG3512">
    <property type="taxonomic scope" value="Eukaryota"/>
</dbReference>
<dbReference type="HOGENOM" id="CLU_018213_2_0_1"/>
<dbReference type="InParanoid" id="Q24567"/>
<dbReference type="OMA" id="AADCESY"/>
<dbReference type="OrthoDB" id="5984158at2759"/>
<dbReference type="PhylomeDB" id="Q24567"/>
<dbReference type="SignaLink" id="Q24567"/>
<dbReference type="BioGRID-ORCS" id="32398">
    <property type="hits" value="0 hits in 3 CRISPR screens"/>
</dbReference>
<dbReference type="GenomeRNAi" id="32398"/>
<dbReference type="PRO" id="PR:Q24567"/>
<dbReference type="Proteomes" id="UP000000803">
    <property type="component" value="Chromosome X"/>
</dbReference>
<dbReference type="Bgee" id="FBgn0015773">
    <property type="expression patterns" value="Expressed in lamina monopolar neuron L3 (Drosophila) in brain and 63 other cell types or tissues"/>
</dbReference>
<dbReference type="ExpressionAtlas" id="Q24567">
    <property type="expression patterns" value="baseline and differential"/>
</dbReference>
<dbReference type="GO" id="GO:0044295">
    <property type="term" value="C:axonal growth cone"/>
    <property type="evidence" value="ECO:0000315"/>
    <property type="project" value="UniProtKB"/>
</dbReference>
<dbReference type="GO" id="GO:0005604">
    <property type="term" value="C:basement membrane"/>
    <property type="evidence" value="ECO:0000318"/>
    <property type="project" value="GO_Central"/>
</dbReference>
<dbReference type="GO" id="GO:0005829">
    <property type="term" value="C:cytosol"/>
    <property type="evidence" value="ECO:0007005"/>
    <property type="project" value="FlyBase"/>
</dbReference>
<dbReference type="GO" id="GO:0031012">
    <property type="term" value="C:extracellular matrix"/>
    <property type="evidence" value="ECO:0000250"/>
    <property type="project" value="FlyBase"/>
</dbReference>
<dbReference type="GO" id="GO:0005576">
    <property type="term" value="C:extracellular region"/>
    <property type="evidence" value="ECO:0007669"/>
    <property type="project" value="UniProtKB-KW"/>
</dbReference>
<dbReference type="GO" id="GO:0009887">
    <property type="term" value="P:animal organ morphogenesis"/>
    <property type="evidence" value="ECO:0000318"/>
    <property type="project" value="GO_Central"/>
</dbReference>
<dbReference type="GO" id="GO:0007411">
    <property type="term" value="P:axon guidance"/>
    <property type="evidence" value="ECO:0000316"/>
    <property type="project" value="FlyBase"/>
</dbReference>
<dbReference type="GO" id="GO:0048749">
    <property type="term" value="P:compound eye development"/>
    <property type="evidence" value="ECO:0000315"/>
    <property type="project" value="UniProtKB"/>
</dbReference>
<dbReference type="GO" id="GO:0016358">
    <property type="term" value="P:dendrite development"/>
    <property type="evidence" value="ECO:0000318"/>
    <property type="project" value="GO_Central"/>
</dbReference>
<dbReference type="GO" id="GO:0070983">
    <property type="term" value="P:dendrite guidance"/>
    <property type="evidence" value="ECO:0000316"/>
    <property type="project" value="FlyBase"/>
</dbReference>
<dbReference type="GO" id="GO:0008347">
    <property type="term" value="P:glial cell migration"/>
    <property type="evidence" value="ECO:0000315"/>
    <property type="project" value="FlyBase"/>
</dbReference>
<dbReference type="GO" id="GO:0008045">
    <property type="term" value="P:motor neuron axon guidance"/>
    <property type="evidence" value="ECO:0000315"/>
    <property type="project" value="FlyBase"/>
</dbReference>
<dbReference type="GO" id="GO:2000289">
    <property type="term" value="P:regulation of photoreceptor cell axon guidance"/>
    <property type="evidence" value="ECO:0000315"/>
    <property type="project" value="FlyBase"/>
</dbReference>
<dbReference type="GO" id="GO:0009888">
    <property type="term" value="P:tissue development"/>
    <property type="evidence" value="ECO:0000318"/>
    <property type="project" value="GO_Central"/>
</dbReference>
<dbReference type="CDD" id="cd00055">
    <property type="entry name" value="EGF_Lam"/>
    <property type="match status" value="3"/>
</dbReference>
<dbReference type="CDD" id="cd03579">
    <property type="entry name" value="NTR_netrin-1_like"/>
    <property type="match status" value="1"/>
</dbReference>
<dbReference type="FunFam" id="2.10.25.10:FF:000081">
    <property type="entry name" value="Netrin 1"/>
    <property type="match status" value="1"/>
</dbReference>
<dbReference type="FunFam" id="2.10.25.10:FF:000048">
    <property type="entry name" value="Netrin 3"/>
    <property type="match status" value="1"/>
</dbReference>
<dbReference type="Gene3D" id="2.40.50.120">
    <property type="match status" value="1"/>
</dbReference>
<dbReference type="Gene3D" id="2.60.120.260">
    <property type="entry name" value="Galactose-binding domain-like"/>
    <property type="match status" value="1"/>
</dbReference>
<dbReference type="Gene3D" id="2.10.25.10">
    <property type="entry name" value="Laminin"/>
    <property type="match status" value="2"/>
</dbReference>
<dbReference type="InterPro" id="IPR050440">
    <property type="entry name" value="Laminin/Netrin_ECM"/>
</dbReference>
<dbReference type="InterPro" id="IPR008211">
    <property type="entry name" value="Laminin_N"/>
</dbReference>
<dbReference type="InterPro" id="IPR002049">
    <property type="entry name" value="LE_dom"/>
</dbReference>
<dbReference type="InterPro" id="IPR056863">
    <property type="entry name" value="LMN_ATRN_NET-like_EGF"/>
</dbReference>
<dbReference type="InterPro" id="IPR001134">
    <property type="entry name" value="Netrin_domain"/>
</dbReference>
<dbReference type="InterPro" id="IPR018933">
    <property type="entry name" value="Netrin_module_non-TIMP"/>
</dbReference>
<dbReference type="InterPro" id="IPR008993">
    <property type="entry name" value="TIMP-like_OB-fold"/>
</dbReference>
<dbReference type="PANTHER" id="PTHR10574:SF365">
    <property type="entry name" value="NETRIN-A-RELATED"/>
    <property type="match status" value="1"/>
</dbReference>
<dbReference type="PANTHER" id="PTHR10574">
    <property type="entry name" value="NETRIN/LAMININ-RELATED"/>
    <property type="match status" value="1"/>
</dbReference>
<dbReference type="Pfam" id="PF00053">
    <property type="entry name" value="EGF_laminin"/>
    <property type="match status" value="2"/>
</dbReference>
<dbReference type="Pfam" id="PF24973">
    <property type="entry name" value="EGF_LMN_ATRN"/>
    <property type="match status" value="1"/>
</dbReference>
<dbReference type="Pfam" id="PF00055">
    <property type="entry name" value="Laminin_N"/>
    <property type="match status" value="1"/>
</dbReference>
<dbReference type="Pfam" id="PF01759">
    <property type="entry name" value="NTR"/>
    <property type="match status" value="1"/>
</dbReference>
<dbReference type="SMART" id="SM00643">
    <property type="entry name" value="C345C"/>
    <property type="match status" value="1"/>
</dbReference>
<dbReference type="SMART" id="SM00180">
    <property type="entry name" value="EGF_Lam"/>
    <property type="match status" value="3"/>
</dbReference>
<dbReference type="SMART" id="SM00136">
    <property type="entry name" value="LamNT"/>
    <property type="match status" value="1"/>
</dbReference>
<dbReference type="SUPFAM" id="SSF57196">
    <property type="entry name" value="EGF/Laminin"/>
    <property type="match status" value="3"/>
</dbReference>
<dbReference type="SUPFAM" id="SSF50242">
    <property type="entry name" value="TIMP-like"/>
    <property type="match status" value="1"/>
</dbReference>
<dbReference type="PROSITE" id="PS00022">
    <property type="entry name" value="EGF_1"/>
    <property type="match status" value="2"/>
</dbReference>
<dbReference type="PROSITE" id="PS01248">
    <property type="entry name" value="EGF_LAM_1"/>
    <property type="match status" value="3"/>
</dbReference>
<dbReference type="PROSITE" id="PS50027">
    <property type="entry name" value="EGF_LAM_2"/>
    <property type="match status" value="3"/>
</dbReference>
<dbReference type="PROSITE" id="PS51117">
    <property type="entry name" value="LAMININ_NTER"/>
    <property type="match status" value="1"/>
</dbReference>
<dbReference type="PROSITE" id="PS50189">
    <property type="entry name" value="NTR"/>
    <property type="match status" value="1"/>
</dbReference>
<gene>
    <name type="primary">NetA</name>
    <name type="ORF">CG18657</name>
</gene>
<evidence type="ECO:0000250" key="1"/>
<evidence type="ECO:0000255" key="2"/>
<evidence type="ECO:0000255" key="3">
    <source>
        <dbReference type="PROSITE-ProRule" id="PRU00295"/>
    </source>
</evidence>
<evidence type="ECO:0000255" key="4">
    <source>
        <dbReference type="PROSITE-ProRule" id="PRU00460"/>
    </source>
</evidence>
<evidence type="ECO:0000255" key="5">
    <source>
        <dbReference type="PROSITE-ProRule" id="PRU00466"/>
    </source>
</evidence>
<evidence type="ECO:0000256" key="6">
    <source>
        <dbReference type="SAM" id="MobiDB-lite"/>
    </source>
</evidence>
<evidence type="ECO:0000269" key="7">
    <source>
    </source>
</evidence>
<evidence type="ECO:0000269" key="8">
    <source>
    </source>
</evidence>
<evidence type="ECO:0000305" key="9"/>